<accession>Q9B203</accession>
<geneLocation type="mitochondrion"/>
<comment type="function">
    <text evidence="2">Component of the ubiquinol-cytochrome c reductase complex (complex III or cytochrome b-c1 complex) that is part of the mitochondrial respiratory chain. The b-c1 complex mediates electron transfer from ubiquinol to cytochrome c. Contributes to the generation of a proton gradient across the mitochondrial membrane that is then used for ATP synthesis.</text>
</comment>
<comment type="cofactor">
    <cofactor evidence="2">
        <name>heme b</name>
        <dbReference type="ChEBI" id="CHEBI:60344"/>
    </cofactor>
    <text evidence="2">Binds 2 heme b groups non-covalently.</text>
</comment>
<comment type="subunit">
    <text evidence="2">The cytochrome bc1 complex contains 11 subunits: 3 respiratory subunits (MT-CYB, CYC1 and UQCRFS1), 2 core proteins (UQCRC1 and UQCRC2) and 6 low-molecular weight proteins (UQCRH/QCR6, UQCRB/QCR7, UQCRQ/QCR8, UQCR10/QCR9, UQCR11/QCR10 and a cleavage product of UQCRFS1). This cytochrome bc1 complex then forms a dimer.</text>
</comment>
<comment type="subcellular location">
    <subcellularLocation>
        <location evidence="2">Mitochondrion inner membrane</location>
        <topology evidence="2">Multi-pass membrane protein</topology>
    </subcellularLocation>
</comment>
<comment type="miscellaneous">
    <text evidence="1">Heme 1 (or BL or b562) is low-potential and absorbs at about 562 nm, and heme 2 (or BH or b566) is high-potential and absorbs at about 566 nm.</text>
</comment>
<comment type="similarity">
    <text evidence="3 4">Belongs to the cytochrome b family.</text>
</comment>
<comment type="caution">
    <text evidence="2">The full-length protein contains only eight transmembrane helices, not nine as predicted by bioinformatics tools.</text>
</comment>
<name>CYB_FICPA</name>
<proteinExistence type="inferred from homology"/>
<feature type="chain" id="PRO_0000060975" description="Cytochrome b">
    <location>
        <begin position="1"/>
        <end position="380"/>
    </location>
</feature>
<feature type="transmembrane region" description="Helical" evidence="2">
    <location>
        <begin position="34"/>
        <end position="54"/>
    </location>
</feature>
<feature type="transmembrane region" description="Helical" evidence="2">
    <location>
        <begin position="78"/>
        <end position="99"/>
    </location>
</feature>
<feature type="transmembrane region" description="Helical" evidence="2">
    <location>
        <begin position="114"/>
        <end position="134"/>
    </location>
</feature>
<feature type="transmembrane region" description="Helical" evidence="2">
    <location>
        <begin position="179"/>
        <end position="199"/>
    </location>
</feature>
<feature type="transmembrane region" description="Helical" evidence="2">
    <location>
        <begin position="227"/>
        <end position="247"/>
    </location>
</feature>
<feature type="transmembrane region" description="Helical" evidence="2">
    <location>
        <begin position="289"/>
        <end position="309"/>
    </location>
</feature>
<feature type="transmembrane region" description="Helical" evidence="2">
    <location>
        <begin position="321"/>
        <end position="341"/>
    </location>
</feature>
<feature type="transmembrane region" description="Helical" evidence="2">
    <location>
        <begin position="348"/>
        <end position="368"/>
    </location>
</feature>
<feature type="binding site" description="axial binding residue" evidence="2">
    <location>
        <position position="84"/>
    </location>
    <ligand>
        <name>heme b</name>
        <dbReference type="ChEBI" id="CHEBI:60344"/>
        <label>b562</label>
    </ligand>
    <ligandPart>
        <name>Fe</name>
        <dbReference type="ChEBI" id="CHEBI:18248"/>
    </ligandPart>
</feature>
<feature type="binding site" description="axial binding residue" evidence="2">
    <location>
        <position position="98"/>
    </location>
    <ligand>
        <name>heme b</name>
        <dbReference type="ChEBI" id="CHEBI:60344"/>
        <label>b566</label>
    </ligand>
    <ligandPart>
        <name>Fe</name>
        <dbReference type="ChEBI" id="CHEBI:18248"/>
    </ligandPart>
</feature>
<feature type="binding site" description="axial binding residue" evidence="2">
    <location>
        <position position="183"/>
    </location>
    <ligand>
        <name>heme b</name>
        <dbReference type="ChEBI" id="CHEBI:60344"/>
        <label>b562</label>
    </ligand>
    <ligandPart>
        <name>Fe</name>
        <dbReference type="ChEBI" id="CHEBI:18248"/>
    </ligandPart>
</feature>
<feature type="binding site" description="axial binding residue" evidence="2">
    <location>
        <position position="197"/>
    </location>
    <ligand>
        <name>heme b</name>
        <dbReference type="ChEBI" id="CHEBI:60344"/>
        <label>b566</label>
    </ligand>
    <ligandPart>
        <name>Fe</name>
        <dbReference type="ChEBI" id="CHEBI:18248"/>
    </ligandPart>
</feature>
<feature type="binding site" evidence="2">
    <location>
        <position position="202"/>
    </location>
    <ligand>
        <name>a ubiquinone</name>
        <dbReference type="ChEBI" id="CHEBI:16389"/>
    </ligand>
</feature>
<dbReference type="EMBL" id="AJ299689">
    <property type="protein sequence ID" value="CAC35114.1"/>
    <property type="molecule type" value="Genomic_DNA"/>
</dbReference>
<dbReference type="SMR" id="Q9B203"/>
<dbReference type="GO" id="GO:0005743">
    <property type="term" value="C:mitochondrial inner membrane"/>
    <property type="evidence" value="ECO:0007669"/>
    <property type="project" value="UniProtKB-SubCell"/>
</dbReference>
<dbReference type="GO" id="GO:0045275">
    <property type="term" value="C:respiratory chain complex III"/>
    <property type="evidence" value="ECO:0007669"/>
    <property type="project" value="InterPro"/>
</dbReference>
<dbReference type="GO" id="GO:0046872">
    <property type="term" value="F:metal ion binding"/>
    <property type="evidence" value="ECO:0007669"/>
    <property type="project" value="UniProtKB-KW"/>
</dbReference>
<dbReference type="GO" id="GO:0008121">
    <property type="term" value="F:ubiquinol-cytochrome-c reductase activity"/>
    <property type="evidence" value="ECO:0007669"/>
    <property type="project" value="InterPro"/>
</dbReference>
<dbReference type="GO" id="GO:0006122">
    <property type="term" value="P:mitochondrial electron transport, ubiquinol to cytochrome c"/>
    <property type="evidence" value="ECO:0007669"/>
    <property type="project" value="TreeGrafter"/>
</dbReference>
<dbReference type="CDD" id="cd00290">
    <property type="entry name" value="cytochrome_b_C"/>
    <property type="match status" value="1"/>
</dbReference>
<dbReference type="CDD" id="cd00284">
    <property type="entry name" value="Cytochrome_b_N"/>
    <property type="match status" value="1"/>
</dbReference>
<dbReference type="FunFam" id="1.20.810.10:FF:000002">
    <property type="entry name" value="Cytochrome b"/>
    <property type="match status" value="1"/>
</dbReference>
<dbReference type="Gene3D" id="1.20.810.10">
    <property type="entry name" value="Cytochrome Bc1 Complex, Chain C"/>
    <property type="match status" value="1"/>
</dbReference>
<dbReference type="InterPro" id="IPR005798">
    <property type="entry name" value="Cyt_b/b6_C"/>
</dbReference>
<dbReference type="InterPro" id="IPR036150">
    <property type="entry name" value="Cyt_b/b6_C_sf"/>
</dbReference>
<dbReference type="InterPro" id="IPR005797">
    <property type="entry name" value="Cyt_b/b6_N"/>
</dbReference>
<dbReference type="InterPro" id="IPR027387">
    <property type="entry name" value="Cytb/b6-like_sf"/>
</dbReference>
<dbReference type="InterPro" id="IPR030689">
    <property type="entry name" value="Cytochrome_b"/>
</dbReference>
<dbReference type="InterPro" id="IPR048260">
    <property type="entry name" value="Cytochrome_b_C_euk/bac"/>
</dbReference>
<dbReference type="InterPro" id="IPR048259">
    <property type="entry name" value="Cytochrome_b_N_euk/bac"/>
</dbReference>
<dbReference type="InterPro" id="IPR016174">
    <property type="entry name" value="Di-haem_cyt_TM"/>
</dbReference>
<dbReference type="PANTHER" id="PTHR19271">
    <property type="entry name" value="CYTOCHROME B"/>
    <property type="match status" value="1"/>
</dbReference>
<dbReference type="PANTHER" id="PTHR19271:SF16">
    <property type="entry name" value="CYTOCHROME B"/>
    <property type="match status" value="1"/>
</dbReference>
<dbReference type="Pfam" id="PF00032">
    <property type="entry name" value="Cytochrom_B_C"/>
    <property type="match status" value="1"/>
</dbReference>
<dbReference type="Pfam" id="PF00033">
    <property type="entry name" value="Cytochrome_B"/>
    <property type="match status" value="1"/>
</dbReference>
<dbReference type="PIRSF" id="PIRSF038885">
    <property type="entry name" value="COB"/>
    <property type="match status" value="1"/>
</dbReference>
<dbReference type="SUPFAM" id="SSF81648">
    <property type="entry name" value="a domain/subunit of cytochrome bc1 complex (Ubiquinol-cytochrome c reductase)"/>
    <property type="match status" value="1"/>
</dbReference>
<dbReference type="SUPFAM" id="SSF81342">
    <property type="entry name" value="Transmembrane di-heme cytochromes"/>
    <property type="match status" value="1"/>
</dbReference>
<dbReference type="PROSITE" id="PS51003">
    <property type="entry name" value="CYTB_CTER"/>
    <property type="match status" value="1"/>
</dbReference>
<dbReference type="PROSITE" id="PS51002">
    <property type="entry name" value="CYTB_NTER"/>
    <property type="match status" value="1"/>
</dbReference>
<sequence length="380" mass="42196">MALNLRKNHPLFKTINDALIDLPTPSNISAWWNFGSLLGICLITQIVTGLLLATHYTADTSLAFNSVAHMCRNVQFGWLIRNLHANGASFFFICIYLHIGRGFYYGSYLNKETWNVGVVLLLLLMATAFVGYVLPWGQMSFWGATVITNLLSAIPYIGQTLVEWAWGGFSVDNPTLTRFFALHFLLPFVIAGITLVHLTFLHETGSNNPLGIPADCDKIPFHPYYSTKDILGFALMLILLVALALFSPNLLGDPENFTPANPLATPPHIKPEWYFLFAYAILRSIPNKLGGVLALAASVLVLFLVPLLHTSKQRSLTFRPISQVLFWALVANLLILTWVGGQPVEHPFIIIGQLASLSYFTIILVLFPLAAVLENKMLNL</sequence>
<evidence type="ECO:0000250" key="1"/>
<evidence type="ECO:0000250" key="2">
    <source>
        <dbReference type="UniProtKB" id="P00157"/>
    </source>
</evidence>
<evidence type="ECO:0000255" key="3">
    <source>
        <dbReference type="PROSITE-ProRule" id="PRU00967"/>
    </source>
</evidence>
<evidence type="ECO:0000255" key="4">
    <source>
        <dbReference type="PROSITE-ProRule" id="PRU00968"/>
    </source>
</evidence>
<protein>
    <recommendedName>
        <fullName>Cytochrome b</fullName>
    </recommendedName>
    <alternativeName>
        <fullName>Complex III subunit 3</fullName>
    </alternativeName>
    <alternativeName>
        <fullName>Complex III subunit III</fullName>
    </alternativeName>
    <alternativeName>
        <fullName>Cytochrome b-c1 complex subunit 3</fullName>
    </alternativeName>
    <alternativeName>
        <fullName>Ubiquinol-cytochrome-c reductase complex cytochrome b subunit</fullName>
    </alternativeName>
</protein>
<gene>
    <name type="primary">MT-CYB</name>
    <name type="synonym">COB</name>
    <name type="synonym">CYTB</name>
    <name type="synonym">MTCYB</name>
</gene>
<organism>
    <name type="scientific">Ficedula parva</name>
    <name type="common">Red-breasted flycatcher</name>
    <name type="synonym">Muscicapa parva</name>
    <dbReference type="NCBI Taxonomy" id="126711"/>
    <lineage>
        <taxon>Eukaryota</taxon>
        <taxon>Metazoa</taxon>
        <taxon>Chordata</taxon>
        <taxon>Craniata</taxon>
        <taxon>Vertebrata</taxon>
        <taxon>Euteleostomi</taxon>
        <taxon>Archelosauria</taxon>
        <taxon>Archosauria</taxon>
        <taxon>Dinosauria</taxon>
        <taxon>Saurischia</taxon>
        <taxon>Theropoda</taxon>
        <taxon>Coelurosauria</taxon>
        <taxon>Aves</taxon>
        <taxon>Neognathae</taxon>
        <taxon>Neoaves</taxon>
        <taxon>Telluraves</taxon>
        <taxon>Australaves</taxon>
        <taxon>Passeriformes</taxon>
        <taxon>Muscicapidae</taxon>
        <taxon>Ficedula</taxon>
    </lineage>
</organism>
<keyword id="KW-0249">Electron transport</keyword>
<keyword id="KW-0349">Heme</keyword>
<keyword id="KW-0408">Iron</keyword>
<keyword id="KW-0472">Membrane</keyword>
<keyword id="KW-0479">Metal-binding</keyword>
<keyword id="KW-0496">Mitochondrion</keyword>
<keyword id="KW-0999">Mitochondrion inner membrane</keyword>
<keyword id="KW-0679">Respiratory chain</keyword>
<keyword id="KW-0812">Transmembrane</keyword>
<keyword id="KW-1133">Transmembrane helix</keyword>
<keyword id="KW-0813">Transport</keyword>
<keyword id="KW-0830">Ubiquinone</keyword>
<reference key="1">
    <citation type="journal article" date="2001" name="Mol. Ecol.">
        <title>Speciation, introgressive hybridization and nonlinear rate of molecular evolution in flycatchers.</title>
        <authorList>
            <person name="Saetre G.P."/>
            <person name="Borge T."/>
            <person name="Lindell J."/>
            <person name="Moum T."/>
            <person name="Primmer C.R."/>
            <person name="Sheldon B.C."/>
            <person name="Haavie J."/>
            <person name="Johnsen A."/>
            <person name="Ellegren H."/>
        </authorList>
    </citation>
    <scope>NUCLEOTIDE SEQUENCE [GENOMIC DNA]</scope>
    <source>
        <strain>Cz1</strain>
        <tissue>Blood</tissue>
    </source>
</reference>